<name>KCY_THESQ</name>
<accession>B1LBI1</accession>
<reference key="1">
    <citation type="journal article" date="2011" name="J. Bacteriol.">
        <title>Genome sequence of Thermotoga sp. strain RQ2, a hyperthermophilic bacterium isolated from a geothermally heated region of the seafloor near Ribeira Quente, the Azores.</title>
        <authorList>
            <person name="Swithers K.S."/>
            <person name="DiPippo J.L."/>
            <person name="Bruce D.C."/>
            <person name="Detter C."/>
            <person name="Tapia R."/>
            <person name="Han S."/>
            <person name="Saunders E."/>
            <person name="Goodwin L.A."/>
            <person name="Han J."/>
            <person name="Woyke T."/>
            <person name="Pitluck S."/>
            <person name="Pennacchio L."/>
            <person name="Nolan M."/>
            <person name="Mikhailova N."/>
            <person name="Lykidis A."/>
            <person name="Land M.L."/>
            <person name="Brettin T."/>
            <person name="Stetter K.O."/>
            <person name="Nelson K.E."/>
            <person name="Gogarten J.P."/>
            <person name="Noll K.M."/>
        </authorList>
    </citation>
    <scope>NUCLEOTIDE SEQUENCE [LARGE SCALE GENOMIC DNA]</scope>
    <source>
        <strain>RQ2</strain>
    </source>
</reference>
<gene>
    <name evidence="1" type="primary">cmk</name>
    <name type="ordered locus">TRQ2_1335</name>
</gene>
<proteinExistence type="inferred from homology"/>
<feature type="chain" id="PRO_1000100697" description="Cytidylate kinase">
    <location>
        <begin position="1"/>
        <end position="220"/>
    </location>
</feature>
<feature type="binding site" evidence="1">
    <location>
        <begin position="9"/>
        <end position="17"/>
    </location>
    <ligand>
        <name>ATP</name>
        <dbReference type="ChEBI" id="CHEBI:30616"/>
    </ligand>
</feature>
<comment type="catalytic activity">
    <reaction evidence="1">
        <text>CMP + ATP = CDP + ADP</text>
        <dbReference type="Rhea" id="RHEA:11600"/>
        <dbReference type="ChEBI" id="CHEBI:30616"/>
        <dbReference type="ChEBI" id="CHEBI:58069"/>
        <dbReference type="ChEBI" id="CHEBI:60377"/>
        <dbReference type="ChEBI" id="CHEBI:456216"/>
        <dbReference type="EC" id="2.7.4.25"/>
    </reaction>
</comment>
<comment type="catalytic activity">
    <reaction evidence="1">
        <text>dCMP + ATP = dCDP + ADP</text>
        <dbReference type="Rhea" id="RHEA:25094"/>
        <dbReference type="ChEBI" id="CHEBI:30616"/>
        <dbReference type="ChEBI" id="CHEBI:57566"/>
        <dbReference type="ChEBI" id="CHEBI:58593"/>
        <dbReference type="ChEBI" id="CHEBI:456216"/>
        <dbReference type="EC" id="2.7.4.25"/>
    </reaction>
</comment>
<comment type="subcellular location">
    <subcellularLocation>
        <location evidence="1">Cytoplasm</location>
    </subcellularLocation>
</comment>
<comment type="similarity">
    <text evidence="1">Belongs to the cytidylate kinase family. Type 1 subfamily.</text>
</comment>
<dbReference type="EC" id="2.7.4.25" evidence="1"/>
<dbReference type="EMBL" id="CP000969">
    <property type="protein sequence ID" value="ACB09679.1"/>
    <property type="molecule type" value="Genomic_DNA"/>
</dbReference>
<dbReference type="RefSeq" id="WP_012311078.1">
    <property type="nucleotide sequence ID" value="NC_010483.1"/>
</dbReference>
<dbReference type="SMR" id="B1LBI1"/>
<dbReference type="KEGG" id="trq:TRQ2_1335"/>
<dbReference type="HOGENOM" id="CLU_079959_0_2_0"/>
<dbReference type="Proteomes" id="UP000001687">
    <property type="component" value="Chromosome"/>
</dbReference>
<dbReference type="GO" id="GO:0005829">
    <property type="term" value="C:cytosol"/>
    <property type="evidence" value="ECO:0007669"/>
    <property type="project" value="TreeGrafter"/>
</dbReference>
<dbReference type="GO" id="GO:0005524">
    <property type="term" value="F:ATP binding"/>
    <property type="evidence" value="ECO:0007669"/>
    <property type="project" value="UniProtKB-UniRule"/>
</dbReference>
<dbReference type="GO" id="GO:0036430">
    <property type="term" value="F:CMP kinase activity"/>
    <property type="evidence" value="ECO:0007669"/>
    <property type="project" value="RHEA"/>
</dbReference>
<dbReference type="GO" id="GO:0036431">
    <property type="term" value="F:dCMP kinase activity"/>
    <property type="evidence" value="ECO:0007669"/>
    <property type="project" value="RHEA"/>
</dbReference>
<dbReference type="GO" id="GO:0015949">
    <property type="term" value="P:nucleobase-containing small molecule interconversion"/>
    <property type="evidence" value="ECO:0007669"/>
    <property type="project" value="TreeGrafter"/>
</dbReference>
<dbReference type="GO" id="GO:0006220">
    <property type="term" value="P:pyrimidine nucleotide metabolic process"/>
    <property type="evidence" value="ECO:0007669"/>
    <property type="project" value="UniProtKB-UniRule"/>
</dbReference>
<dbReference type="CDD" id="cd02020">
    <property type="entry name" value="CMPK"/>
    <property type="match status" value="1"/>
</dbReference>
<dbReference type="FunFam" id="3.40.50.300:FF:002458">
    <property type="entry name" value="Cytidylate kinase"/>
    <property type="match status" value="1"/>
</dbReference>
<dbReference type="Gene3D" id="3.40.50.300">
    <property type="entry name" value="P-loop containing nucleotide triphosphate hydrolases"/>
    <property type="match status" value="1"/>
</dbReference>
<dbReference type="HAMAP" id="MF_00238">
    <property type="entry name" value="Cytidyl_kinase_type1"/>
    <property type="match status" value="1"/>
</dbReference>
<dbReference type="InterPro" id="IPR003136">
    <property type="entry name" value="Cytidylate_kin"/>
</dbReference>
<dbReference type="InterPro" id="IPR011994">
    <property type="entry name" value="Cytidylate_kinase_dom"/>
</dbReference>
<dbReference type="InterPro" id="IPR027417">
    <property type="entry name" value="P-loop_NTPase"/>
</dbReference>
<dbReference type="NCBIfam" id="TIGR00017">
    <property type="entry name" value="cmk"/>
    <property type="match status" value="1"/>
</dbReference>
<dbReference type="PANTHER" id="PTHR21299:SF2">
    <property type="entry name" value="CYTIDYLATE KINASE"/>
    <property type="match status" value="1"/>
</dbReference>
<dbReference type="PANTHER" id="PTHR21299">
    <property type="entry name" value="CYTIDYLATE KINASE/PANTOATE-BETA-ALANINE LIGASE"/>
    <property type="match status" value="1"/>
</dbReference>
<dbReference type="Pfam" id="PF02224">
    <property type="entry name" value="Cytidylate_kin"/>
    <property type="match status" value="1"/>
</dbReference>
<dbReference type="SUPFAM" id="SSF52540">
    <property type="entry name" value="P-loop containing nucleoside triphosphate hydrolases"/>
    <property type="match status" value="1"/>
</dbReference>
<keyword id="KW-0067">ATP-binding</keyword>
<keyword id="KW-0963">Cytoplasm</keyword>
<keyword id="KW-0418">Kinase</keyword>
<keyword id="KW-0547">Nucleotide-binding</keyword>
<keyword id="KW-0808">Transferase</keyword>
<evidence type="ECO:0000255" key="1">
    <source>
        <dbReference type="HAMAP-Rule" id="MF_00238"/>
    </source>
</evidence>
<sequence length="220" mass="24696">MGFQIAIDGPAASGKSTVARLLAEKLGFDHLNTGATYRAVAVYLHEKGLSPSSAEEEIENALKNLKIDYVNGRVYINGKDYTEKIQSPEAGVLASNFARLEVVRRHLVRIQREICDDKNIVVEGRDIGTVVLPNAHLKIFLTASLEARVERKLKEYQKRGLKVTKEEVERELISRDEQDSKRNVAPLKPAEDAVIIDTTSMSVEEVLDRILKLVRERMNT</sequence>
<organism>
    <name type="scientific">Thermotoga sp. (strain RQ2)</name>
    <dbReference type="NCBI Taxonomy" id="126740"/>
    <lineage>
        <taxon>Bacteria</taxon>
        <taxon>Thermotogati</taxon>
        <taxon>Thermotogota</taxon>
        <taxon>Thermotogae</taxon>
        <taxon>Thermotogales</taxon>
        <taxon>Thermotogaceae</taxon>
        <taxon>Thermotoga</taxon>
    </lineage>
</organism>
<protein>
    <recommendedName>
        <fullName evidence="1">Cytidylate kinase</fullName>
        <shortName evidence="1">CK</shortName>
        <ecNumber evidence="1">2.7.4.25</ecNumber>
    </recommendedName>
    <alternativeName>
        <fullName evidence="1">Cytidine monophosphate kinase</fullName>
        <shortName evidence="1">CMP kinase</shortName>
    </alternativeName>
</protein>